<gene>
    <name evidence="1" type="primary">pdxH</name>
    <name type="ordered locus">ECH_0931</name>
</gene>
<sequence length="199" mass="23296">MIKKDPIELFDLWYNEVLAVSLQDKKDPTAMVLATCSKDLKPSARVVLLKKYSDQGFVFFTNMNSRKGKEMAENPSVALVFDWSRISKQVRIEGRIKMLPCNDADEYYASRPRGSQIGAWCSKQSSVLENREDFVELIKEMTIKFHEKPIPRPDYWVGIVVVPMLMEFWQEGLNRIHTRYQYTRDSNNMDKWNVVSLYP</sequence>
<keyword id="KW-0285">Flavoprotein</keyword>
<keyword id="KW-0288">FMN</keyword>
<keyword id="KW-0560">Oxidoreductase</keyword>
<keyword id="KW-0664">Pyridoxine biosynthesis</keyword>
<keyword id="KW-1185">Reference proteome</keyword>
<name>PDXH_EHRCR</name>
<organism>
    <name type="scientific">Ehrlichia chaffeensis (strain ATCC CRL-10679 / Arkansas)</name>
    <dbReference type="NCBI Taxonomy" id="205920"/>
    <lineage>
        <taxon>Bacteria</taxon>
        <taxon>Pseudomonadati</taxon>
        <taxon>Pseudomonadota</taxon>
        <taxon>Alphaproteobacteria</taxon>
        <taxon>Rickettsiales</taxon>
        <taxon>Anaplasmataceae</taxon>
        <taxon>Ehrlichia</taxon>
    </lineage>
</organism>
<reference key="1">
    <citation type="journal article" date="2006" name="PLoS Genet.">
        <title>Comparative genomics of emerging human ehrlichiosis agents.</title>
        <authorList>
            <person name="Dunning Hotopp J.C."/>
            <person name="Lin M."/>
            <person name="Madupu R."/>
            <person name="Crabtree J."/>
            <person name="Angiuoli S.V."/>
            <person name="Eisen J.A."/>
            <person name="Seshadri R."/>
            <person name="Ren Q."/>
            <person name="Wu M."/>
            <person name="Utterback T.R."/>
            <person name="Smith S."/>
            <person name="Lewis M."/>
            <person name="Khouri H."/>
            <person name="Zhang C."/>
            <person name="Niu H."/>
            <person name="Lin Q."/>
            <person name="Ohashi N."/>
            <person name="Zhi N."/>
            <person name="Nelson W.C."/>
            <person name="Brinkac L.M."/>
            <person name="Dodson R.J."/>
            <person name="Rosovitz M.J."/>
            <person name="Sundaram J.P."/>
            <person name="Daugherty S.C."/>
            <person name="Davidsen T."/>
            <person name="Durkin A.S."/>
            <person name="Gwinn M.L."/>
            <person name="Haft D.H."/>
            <person name="Selengut J.D."/>
            <person name="Sullivan S.A."/>
            <person name="Zafar N."/>
            <person name="Zhou L."/>
            <person name="Benahmed F."/>
            <person name="Forberger H."/>
            <person name="Halpin R."/>
            <person name="Mulligan S."/>
            <person name="Robinson J."/>
            <person name="White O."/>
            <person name="Rikihisa Y."/>
            <person name="Tettelin H."/>
        </authorList>
    </citation>
    <scope>NUCLEOTIDE SEQUENCE [LARGE SCALE GENOMIC DNA]</scope>
    <source>
        <strain>ATCC CRL-10679 / Arkansas</strain>
    </source>
</reference>
<protein>
    <recommendedName>
        <fullName evidence="1">Pyridoxine/pyridoxamine 5'-phosphate oxidase</fullName>
        <ecNumber evidence="1">1.4.3.5</ecNumber>
    </recommendedName>
    <alternativeName>
        <fullName evidence="1">PNP/PMP oxidase</fullName>
        <shortName evidence="1">PNPOx</shortName>
    </alternativeName>
    <alternativeName>
        <fullName evidence="1">Pyridoxal 5'-phosphate synthase</fullName>
    </alternativeName>
</protein>
<dbReference type="EC" id="1.4.3.5" evidence="1"/>
<dbReference type="EMBL" id="CP000236">
    <property type="protein sequence ID" value="ABD44514.1"/>
    <property type="molecule type" value="Genomic_DNA"/>
</dbReference>
<dbReference type="RefSeq" id="WP_006010577.1">
    <property type="nucleotide sequence ID" value="NC_007799.1"/>
</dbReference>
<dbReference type="SMR" id="Q2GFR2"/>
<dbReference type="STRING" id="205920.ECH_0931"/>
<dbReference type="KEGG" id="ech:ECH_0931"/>
<dbReference type="eggNOG" id="COG0259">
    <property type="taxonomic scope" value="Bacteria"/>
</dbReference>
<dbReference type="HOGENOM" id="CLU_032263_2_2_5"/>
<dbReference type="OrthoDB" id="9780392at2"/>
<dbReference type="UniPathway" id="UPA01068">
    <property type="reaction ID" value="UER00304"/>
</dbReference>
<dbReference type="UniPathway" id="UPA01068">
    <property type="reaction ID" value="UER00305"/>
</dbReference>
<dbReference type="Proteomes" id="UP000008320">
    <property type="component" value="Chromosome"/>
</dbReference>
<dbReference type="GO" id="GO:0010181">
    <property type="term" value="F:FMN binding"/>
    <property type="evidence" value="ECO:0007669"/>
    <property type="project" value="UniProtKB-UniRule"/>
</dbReference>
<dbReference type="GO" id="GO:0004733">
    <property type="term" value="F:pyridoxamine phosphate oxidase activity"/>
    <property type="evidence" value="ECO:0007669"/>
    <property type="project" value="UniProtKB-UniRule"/>
</dbReference>
<dbReference type="GO" id="GO:0008615">
    <property type="term" value="P:pyridoxine biosynthetic process"/>
    <property type="evidence" value="ECO:0007669"/>
    <property type="project" value="UniProtKB-KW"/>
</dbReference>
<dbReference type="FunFam" id="2.30.110.10:FF:000020">
    <property type="entry name" value="PNPO isoform 11"/>
    <property type="match status" value="1"/>
</dbReference>
<dbReference type="Gene3D" id="2.30.110.10">
    <property type="entry name" value="Electron Transport, Fmn-binding Protein, Chain A"/>
    <property type="match status" value="1"/>
</dbReference>
<dbReference type="HAMAP" id="MF_01629">
    <property type="entry name" value="PdxH"/>
    <property type="match status" value="1"/>
</dbReference>
<dbReference type="InterPro" id="IPR000659">
    <property type="entry name" value="Pyridox_Oxase"/>
</dbReference>
<dbReference type="InterPro" id="IPR019740">
    <property type="entry name" value="Pyridox_Oxase_CS"/>
</dbReference>
<dbReference type="InterPro" id="IPR011576">
    <property type="entry name" value="Pyridox_Oxase_N"/>
</dbReference>
<dbReference type="InterPro" id="IPR019576">
    <property type="entry name" value="Pyridoxamine_oxidase_dimer_C"/>
</dbReference>
<dbReference type="InterPro" id="IPR012349">
    <property type="entry name" value="Split_barrel_FMN-bd"/>
</dbReference>
<dbReference type="NCBIfam" id="TIGR00558">
    <property type="entry name" value="pdxH"/>
    <property type="match status" value="1"/>
</dbReference>
<dbReference type="NCBIfam" id="NF004231">
    <property type="entry name" value="PRK05679.1"/>
    <property type="match status" value="1"/>
</dbReference>
<dbReference type="PANTHER" id="PTHR10851:SF0">
    <property type="entry name" value="PYRIDOXINE-5'-PHOSPHATE OXIDASE"/>
    <property type="match status" value="1"/>
</dbReference>
<dbReference type="PANTHER" id="PTHR10851">
    <property type="entry name" value="PYRIDOXINE-5-PHOSPHATE OXIDASE"/>
    <property type="match status" value="1"/>
</dbReference>
<dbReference type="Pfam" id="PF10590">
    <property type="entry name" value="PNP_phzG_C"/>
    <property type="match status" value="1"/>
</dbReference>
<dbReference type="Pfam" id="PF01243">
    <property type="entry name" value="PNPOx_N"/>
    <property type="match status" value="1"/>
</dbReference>
<dbReference type="PIRSF" id="PIRSF000190">
    <property type="entry name" value="Pyd_amn-ph_oxd"/>
    <property type="match status" value="1"/>
</dbReference>
<dbReference type="SUPFAM" id="SSF50475">
    <property type="entry name" value="FMN-binding split barrel"/>
    <property type="match status" value="1"/>
</dbReference>
<dbReference type="PROSITE" id="PS01064">
    <property type="entry name" value="PYRIDOX_OXIDASE"/>
    <property type="match status" value="1"/>
</dbReference>
<feature type="chain" id="PRO_0000255865" description="Pyridoxine/pyridoxamine 5'-phosphate oxidase">
    <location>
        <begin position="1"/>
        <end position="199"/>
    </location>
</feature>
<feature type="binding site" evidence="1">
    <location>
        <begin position="45"/>
        <end position="50"/>
    </location>
    <ligand>
        <name>FMN</name>
        <dbReference type="ChEBI" id="CHEBI:58210"/>
    </ligand>
</feature>
<feature type="binding site" evidence="1">
    <location>
        <position position="50"/>
    </location>
    <ligand>
        <name>substrate</name>
    </ligand>
</feature>
<feature type="binding site" evidence="1">
    <location>
        <begin position="60"/>
        <end position="61"/>
    </location>
    <ligand>
        <name>FMN</name>
        <dbReference type="ChEBI" id="CHEBI:58210"/>
    </ligand>
</feature>
<feature type="binding site" evidence="1">
    <location>
        <position position="66"/>
    </location>
    <ligand>
        <name>FMN</name>
        <dbReference type="ChEBI" id="CHEBI:58210"/>
    </ligand>
</feature>
<feature type="binding site" evidence="1">
    <location>
        <position position="67"/>
    </location>
    <ligand>
        <name>FMN</name>
        <dbReference type="ChEBI" id="CHEBI:58210"/>
    </ligand>
</feature>
<feature type="binding site" evidence="1">
    <location>
        <position position="89"/>
    </location>
    <ligand>
        <name>FMN</name>
        <dbReference type="ChEBI" id="CHEBI:58210"/>
    </ligand>
</feature>
<feature type="binding site" evidence="1">
    <location>
        <position position="107"/>
    </location>
    <ligand>
        <name>substrate</name>
    </ligand>
</feature>
<feature type="binding site" evidence="1">
    <location>
        <position position="111"/>
    </location>
    <ligand>
        <name>substrate</name>
    </ligand>
</feature>
<feature type="binding site" evidence="1">
    <location>
        <position position="115"/>
    </location>
    <ligand>
        <name>substrate</name>
    </ligand>
</feature>
<feature type="binding site" evidence="1">
    <location>
        <begin position="124"/>
        <end position="125"/>
    </location>
    <ligand>
        <name>FMN</name>
        <dbReference type="ChEBI" id="CHEBI:58210"/>
    </ligand>
</feature>
<feature type="binding site" evidence="1">
    <location>
        <position position="169"/>
    </location>
    <ligand>
        <name>FMN</name>
        <dbReference type="ChEBI" id="CHEBI:58210"/>
    </ligand>
</feature>
<feature type="binding site" evidence="1">
    <location>
        <begin position="175"/>
        <end position="177"/>
    </location>
    <ligand>
        <name>substrate</name>
    </ligand>
</feature>
<feature type="binding site" evidence="1">
    <location>
        <position position="179"/>
    </location>
    <ligand>
        <name>FMN</name>
        <dbReference type="ChEBI" id="CHEBI:58210"/>
    </ligand>
</feature>
<evidence type="ECO:0000255" key="1">
    <source>
        <dbReference type="HAMAP-Rule" id="MF_01629"/>
    </source>
</evidence>
<comment type="function">
    <text evidence="1">Catalyzes the oxidation of either pyridoxine 5'-phosphate (PNP) or pyridoxamine 5'-phosphate (PMP) into pyridoxal 5'-phosphate (PLP).</text>
</comment>
<comment type="catalytic activity">
    <reaction evidence="1">
        <text>pyridoxamine 5'-phosphate + O2 + H2O = pyridoxal 5'-phosphate + H2O2 + NH4(+)</text>
        <dbReference type="Rhea" id="RHEA:15817"/>
        <dbReference type="ChEBI" id="CHEBI:15377"/>
        <dbReference type="ChEBI" id="CHEBI:15379"/>
        <dbReference type="ChEBI" id="CHEBI:16240"/>
        <dbReference type="ChEBI" id="CHEBI:28938"/>
        <dbReference type="ChEBI" id="CHEBI:58451"/>
        <dbReference type="ChEBI" id="CHEBI:597326"/>
        <dbReference type="EC" id="1.4.3.5"/>
    </reaction>
</comment>
<comment type="catalytic activity">
    <reaction evidence="1">
        <text>pyridoxine 5'-phosphate + O2 = pyridoxal 5'-phosphate + H2O2</text>
        <dbReference type="Rhea" id="RHEA:15149"/>
        <dbReference type="ChEBI" id="CHEBI:15379"/>
        <dbReference type="ChEBI" id="CHEBI:16240"/>
        <dbReference type="ChEBI" id="CHEBI:58589"/>
        <dbReference type="ChEBI" id="CHEBI:597326"/>
        <dbReference type="EC" id="1.4.3.5"/>
    </reaction>
</comment>
<comment type="cofactor">
    <cofactor evidence="1">
        <name>FMN</name>
        <dbReference type="ChEBI" id="CHEBI:58210"/>
    </cofactor>
    <text evidence="1">Binds 1 FMN per subunit.</text>
</comment>
<comment type="pathway">
    <text evidence="1">Cofactor metabolism; pyridoxal 5'-phosphate salvage; pyridoxal 5'-phosphate from pyridoxamine 5'-phosphate: step 1/1.</text>
</comment>
<comment type="pathway">
    <text evidence="1">Cofactor metabolism; pyridoxal 5'-phosphate salvage; pyridoxal 5'-phosphate from pyridoxine 5'-phosphate: step 1/1.</text>
</comment>
<comment type="subunit">
    <text evidence="1">Homodimer.</text>
</comment>
<comment type="similarity">
    <text evidence="1">Belongs to the pyridoxamine 5'-phosphate oxidase family.</text>
</comment>
<proteinExistence type="inferred from homology"/>
<accession>Q2GFR2</accession>